<reference key="1">
    <citation type="journal article" date="2007" name="PLoS ONE">
        <title>Analysis of the neurotoxin complex genes in Clostridium botulinum A1-A4 and B1 strains: BoNT/A3, /Ba4 and /B1 clusters are located within plasmids.</title>
        <authorList>
            <person name="Smith T.J."/>
            <person name="Hill K.K."/>
            <person name="Foley B.T."/>
            <person name="Detter J.C."/>
            <person name="Munk A.C."/>
            <person name="Bruce D.C."/>
            <person name="Doggett N.A."/>
            <person name="Smith L.A."/>
            <person name="Marks J.D."/>
            <person name="Xie G."/>
            <person name="Brettin T.S."/>
        </authorList>
    </citation>
    <scope>NUCLEOTIDE SEQUENCE [LARGE SCALE GENOMIC DNA]</scope>
    <source>
        <strain>ATCC 19397 / Type A</strain>
    </source>
</reference>
<organism>
    <name type="scientific">Clostridium botulinum (strain ATCC 19397 / Type A)</name>
    <dbReference type="NCBI Taxonomy" id="441770"/>
    <lineage>
        <taxon>Bacteria</taxon>
        <taxon>Bacillati</taxon>
        <taxon>Bacillota</taxon>
        <taxon>Clostridia</taxon>
        <taxon>Eubacteriales</taxon>
        <taxon>Clostridiaceae</taxon>
        <taxon>Clostridium</taxon>
    </lineage>
</organism>
<accession>A7FRB3</accession>
<keyword id="KW-0489">Methyltransferase</keyword>
<keyword id="KW-0949">S-adenosyl-L-methionine</keyword>
<keyword id="KW-0808">Transferase</keyword>
<keyword id="KW-0819">tRNA processing</keyword>
<feature type="chain" id="PRO_1000136343" description="tRNA (guanine-N(7)-)-methyltransferase">
    <location>
        <begin position="1"/>
        <end position="217"/>
    </location>
</feature>
<feature type="region of interest" description="Interaction with RNA" evidence="1">
    <location>
        <begin position="129"/>
        <end position="134"/>
    </location>
</feature>
<feature type="binding site" evidence="1">
    <location>
        <position position="43"/>
    </location>
    <ligand>
        <name>S-adenosyl-L-methionine</name>
        <dbReference type="ChEBI" id="CHEBI:59789"/>
    </ligand>
</feature>
<feature type="binding site" evidence="1">
    <location>
        <position position="68"/>
    </location>
    <ligand>
        <name>S-adenosyl-L-methionine</name>
        <dbReference type="ChEBI" id="CHEBI:59789"/>
    </ligand>
</feature>
<feature type="binding site" evidence="1">
    <location>
        <position position="101"/>
    </location>
    <ligand>
        <name>S-adenosyl-L-methionine</name>
        <dbReference type="ChEBI" id="CHEBI:59789"/>
    </ligand>
</feature>
<feature type="binding site" evidence="1">
    <location>
        <position position="123"/>
    </location>
    <ligand>
        <name>S-adenosyl-L-methionine</name>
        <dbReference type="ChEBI" id="CHEBI:59789"/>
    </ligand>
</feature>
<feature type="binding site" evidence="1">
    <location>
        <position position="127"/>
    </location>
    <ligand>
        <name>substrate</name>
    </ligand>
</feature>
<feature type="binding site" evidence="1">
    <location>
        <position position="159"/>
    </location>
    <ligand>
        <name>substrate</name>
    </ligand>
</feature>
<feature type="binding site" evidence="1">
    <location>
        <begin position="196"/>
        <end position="199"/>
    </location>
    <ligand>
        <name>substrate</name>
    </ligand>
</feature>
<sequence>MRLRKKWWARPEIEASDKFAEEPKELRGKWNKEFNNNNDIHLELGCGRGGFISQLVEKNKDINYVGIDLKDEVIVYAIRKVKEKEEEVKREFKNIKFVTMNIMGIAEVFDKNEISKIYINFCNPWPKERHNKRRLTHTKLLTEYKKFLKPNTEIWFKTDDKELFEDSQEYFKESGFNIEYITYDLHNSDFKENIKTEYETKFETMGMKIMFLKARLL</sequence>
<gene>
    <name evidence="1" type="primary">trmB</name>
    <name type="ordered locus">CLB_0540</name>
</gene>
<comment type="function">
    <text evidence="1">Catalyzes the formation of N(7)-methylguanine at position 46 (m7G46) in tRNA.</text>
</comment>
<comment type="catalytic activity">
    <reaction evidence="1">
        <text>guanosine(46) in tRNA + S-adenosyl-L-methionine = N(7)-methylguanosine(46) in tRNA + S-adenosyl-L-homocysteine</text>
        <dbReference type="Rhea" id="RHEA:42708"/>
        <dbReference type="Rhea" id="RHEA-COMP:10188"/>
        <dbReference type="Rhea" id="RHEA-COMP:10189"/>
        <dbReference type="ChEBI" id="CHEBI:57856"/>
        <dbReference type="ChEBI" id="CHEBI:59789"/>
        <dbReference type="ChEBI" id="CHEBI:74269"/>
        <dbReference type="ChEBI" id="CHEBI:74480"/>
        <dbReference type="EC" id="2.1.1.33"/>
    </reaction>
</comment>
<comment type="pathway">
    <text evidence="1">tRNA modification; N(7)-methylguanine-tRNA biosynthesis.</text>
</comment>
<comment type="similarity">
    <text evidence="1">Belongs to the class I-like SAM-binding methyltransferase superfamily. TrmB family.</text>
</comment>
<name>TRMB_CLOB1</name>
<proteinExistence type="inferred from homology"/>
<protein>
    <recommendedName>
        <fullName evidence="1">tRNA (guanine-N(7)-)-methyltransferase</fullName>
        <ecNumber evidence="1">2.1.1.33</ecNumber>
    </recommendedName>
    <alternativeName>
        <fullName evidence="1">tRNA (guanine(46)-N(7))-methyltransferase</fullName>
    </alternativeName>
    <alternativeName>
        <fullName evidence="1">tRNA(m7G46)-methyltransferase</fullName>
    </alternativeName>
</protein>
<dbReference type="EC" id="2.1.1.33" evidence="1"/>
<dbReference type="EMBL" id="CP000726">
    <property type="protein sequence ID" value="ABS33453.1"/>
    <property type="molecule type" value="Genomic_DNA"/>
</dbReference>
<dbReference type="RefSeq" id="WP_003355768.1">
    <property type="nucleotide sequence ID" value="NC_009697.1"/>
</dbReference>
<dbReference type="SMR" id="A7FRB3"/>
<dbReference type="GeneID" id="5184754"/>
<dbReference type="KEGG" id="cba:CLB_0540"/>
<dbReference type="HOGENOM" id="CLU_050910_2_1_9"/>
<dbReference type="UniPathway" id="UPA00989"/>
<dbReference type="GO" id="GO:0043527">
    <property type="term" value="C:tRNA methyltransferase complex"/>
    <property type="evidence" value="ECO:0007669"/>
    <property type="project" value="TreeGrafter"/>
</dbReference>
<dbReference type="GO" id="GO:0008176">
    <property type="term" value="F:tRNA (guanine(46)-N7)-methyltransferase activity"/>
    <property type="evidence" value="ECO:0007669"/>
    <property type="project" value="UniProtKB-UniRule"/>
</dbReference>
<dbReference type="FunFam" id="3.40.50.150:FF:000396">
    <property type="entry name" value="tRNA (guanine-N(7)-)-methyltransferase"/>
    <property type="match status" value="1"/>
</dbReference>
<dbReference type="Gene3D" id="3.40.50.150">
    <property type="entry name" value="Vaccinia Virus protein VP39"/>
    <property type="match status" value="1"/>
</dbReference>
<dbReference type="HAMAP" id="MF_01057">
    <property type="entry name" value="tRNA_methyltr_TrmB"/>
    <property type="match status" value="1"/>
</dbReference>
<dbReference type="InterPro" id="IPR029063">
    <property type="entry name" value="SAM-dependent_MTases_sf"/>
</dbReference>
<dbReference type="InterPro" id="IPR003358">
    <property type="entry name" value="tRNA_(Gua-N-7)_MeTrfase_Trmb"/>
</dbReference>
<dbReference type="InterPro" id="IPR055361">
    <property type="entry name" value="tRNA_methyltr_TrmB_bact"/>
</dbReference>
<dbReference type="NCBIfam" id="NF001080">
    <property type="entry name" value="PRK00121.2-2"/>
    <property type="match status" value="1"/>
</dbReference>
<dbReference type="NCBIfam" id="TIGR00091">
    <property type="entry name" value="tRNA (guanosine(46)-N7)-methyltransferase TrmB"/>
    <property type="match status" value="1"/>
</dbReference>
<dbReference type="PANTHER" id="PTHR23417">
    <property type="entry name" value="3-DEOXY-D-MANNO-OCTULOSONIC-ACID TRANSFERASE/TRNA GUANINE-N 7 - -METHYLTRANSFERASE"/>
    <property type="match status" value="1"/>
</dbReference>
<dbReference type="PANTHER" id="PTHR23417:SF14">
    <property type="entry name" value="PENTACOTRIPEPTIDE-REPEAT REGION OF PRORP DOMAIN-CONTAINING PROTEIN"/>
    <property type="match status" value="1"/>
</dbReference>
<dbReference type="Pfam" id="PF02390">
    <property type="entry name" value="Methyltransf_4"/>
    <property type="match status" value="1"/>
</dbReference>
<dbReference type="SUPFAM" id="SSF53335">
    <property type="entry name" value="S-adenosyl-L-methionine-dependent methyltransferases"/>
    <property type="match status" value="1"/>
</dbReference>
<dbReference type="PROSITE" id="PS51625">
    <property type="entry name" value="SAM_MT_TRMB"/>
    <property type="match status" value="1"/>
</dbReference>
<evidence type="ECO:0000255" key="1">
    <source>
        <dbReference type="HAMAP-Rule" id="MF_01057"/>
    </source>
</evidence>